<gene>
    <name evidence="1" type="primary">speH</name>
    <name type="ordered locus">Csac_1308</name>
</gene>
<sequence>MHALGRHIIAELYGCDKEVLNNRELIEKIMVESALKAGAEVREVAFHKFSPQGVSGVVVISESHLTIHTWPELGYAAVDVFTCGERVDPWQACNYITEMLKASHMTTTEVKRGLFEQPVKVANL</sequence>
<comment type="function">
    <text evidence="1">Catalyzes the decarboxylation of S-adenosylmethionine to S-adenosylmethioninamine (dcAdoMet), the propylamine donor required for the synthesis of the polyamines spermine and spermidine from the diamine putrescine.</text>
</comment>
<comment type="catalytic activity">
    <reaction evidence="1">
        <text>S-adenosyl-L-methionine + H(+) = S-adenosyl 3-(methylsulfanyl)propylamine + CO2</text>
        <dbReference type="Rhea" id="RHEA:15981"/>
        <dbReference type="ChEBI" id="CHEBI:15378"/>
        <dbReference type="ChEBI" id="CHEBI:16526"/>
        <dbReference type="ChEBI" id="CHEBI:57443"/>
        <dbReference type="ChEBI" id="CHEBI:59789"/>
        <dbReference type="EC" id="4.1.1.50"/>
    </reaction>
</comment>
<comment type="cofactor">
    <cofactor evidence="1">
        <name>pyruvate</name>
        <dbReference type="ChEBI" id="CHEBI:15361"/>
    </cofactor>
    <text evidence="1">Binds 1 pyruvoyl group covalently per subunit.</text>
</comment>
<comment type="pathway">
    <text evidence="1">Amine and polyamine biosynthesis; S-adenosylmethioninamine biosynthesis; S-adenosylmethioninamine from S-adenosyl-L-methionine: step 1/1.</text>
</comment>
<comment type="subunit">
    <text evidence="1">Heterotetramer of two alpha and two beta chains arranged as a dimer of alpha/beta heterodimers.</text>
</comment>
<comment type="PTM">
    <text evidence="1">Is synthesized initially as an inactive proenzyme. Formation of the active enzyme involves a self-maturation process in which the active site pyruvoyl group is generated from an internal serine residue via an autocatalytic post-translational modification. Two non-identical subunits are generated from the proenzyme in this reaction, and the pyruvate is formed at the N-terminus of the alpha chain, which is derived from the carboxyl end of the proenzyme. The post-translation cleavage follows an unusual pathway, termed non-hydrolytic serinolysis, in which the side chain hydroxyl group of the serine supplies its oxygen atom to form the C-terminus of the beta chain, while the remainder of the serine residue undergoes an oxidative deamination to produce ammonia and the pyruvoyl group blocking the N-terminus of the alpha chain.</text>
</comment>
<comment type="similarity">
    <text evidence="1">Belongs to the prokaryotic AdoMetDC family. Type 1 subfamily.</text>
</comment>
<dbReference type="EC" id="4.1.1.50" evidence="1"/>
<dbReference type="EMBL" id="CP000679">
    <property type="protein sequence ID" value="ABP66910.1"/>
    <property type="molecule type" value="Genomic_DNA"/>
</dbReference>
<dbReference type="SMR" id="A4XJ25"/>
<dbReference type="STRING" id="351627.Csac_1308"/>
<dbReference type="KEGG" id="csc:Csac_1308"/>
<dbReference type="eggNOG" id="COG1586">
    <property type="taxonomic scope" value="Bacteria"/>
</dbReference>
<dbReference type="HOGENOM" id="CLU_125470_2_3_9"/>
<dbReference type="OrthoDB" id="9793120at2"/>
<dbReference type="UniPathway" id="UPA00331">
    <property type="reaction ID" value="UER00451"/>
</dbReference>
<dbReference type="Proteomes" id="UP000000256">
    <property type="component" value="Chromosome"/>
</dbReference>
<dbReference type="GO" id="GO:0005829">
    <property type="term" value="C:cytosol"/>
    <property type="evidence" value="ECO:0007669"/>
    <property type="project" value="TreeGrafter"/>
</dbReference>
<dbReference type="GO" id="GO:0004014">
    <property type="term" value="F:adenosylmethionine decarboxylase activity"/>
    <property type="evidence" value="ECO:0007669"/>
    <property type="project" value="UniProtKB-UniRule"/>
</dbReference>
<dbReference type="GO" id="GO:0008295">
    <property type="term" value="P:spermidine biosynthetic process"/>
    <property type="evidence" value="ECO:0007669"/>
    <property type="project" value="UniProtKB-UniRule"/>
</dbReference>
<dbReference type="FunFam" id="3.30.360.110:FF:000001">
    <property type="entry name" value="S-adenosylmethionine decarboxylase proenzyme"/>
    <property type="match status" value="1"/>
</dbReference>
<dbReference type="Gene3D" id="3.30.160.750">
    <property type="match status" value="1"/>
</dbReference>
<dbReference type="Gene3D" id="3.30.360.110">
    <property type="entry name" value="S-adenosylmethionine decarboxylase domain"/>
    <property type="match status" value="1"/>
</dbReference>
<dbReference type="HAMAP" id="MF_00464">
    <property type="entry name" value="AdoMetDC_1"/>
    <property type="match status" value="1"/>
</dbReference>
<dbReference type="InterPro" id="IPR042286">
    <property type="entry name" value="AdoMetDC_C"/>
</dbReference>
<dbReference type="InterPro" id="IPR003826">
    <property type="entry name" value="AdoMetDC_fam_prok"/>
</dbReference>
<dbReference type="InterPro" id="IPR042284">
    <property type="entry name" value="AdoMetDC_N"/>
</dbReference>
<dbReference type="InterPro" id="IPR016067">
    <property type="entry name" value="S-AdoMet_deCO2ase_core"/>
</dbReference>
<dbReference type="InterPro" id="IPR017716">
    <property type="entry name" value="S-AdoMet_deCOase_pro-enz"/>
</dbReference>
<dbReference type="NCBIfam" id="TIGR03330">
    <property type="entry name" value="SAM_DCase_Bsu"/>
    <property type="match status" value="1"/>
</dbReference>
<dbReference type="PANTHER" id="PTHR33866">
    <property type="entry name" value="S-ADENOSYLMETHIONINE DECARBOXYLASE PROENZYME"/>
    <property type="match status" value="1"/>
</dbReference>
<dbReference type="PANTHER" id="PTHR33866:SF2">
    <property type="entry name" value="S-ADENOSYLMETHIONINE DECARBOXYLASE PROENZYME"/>
    <property type="match status" value="1"/>
</dbReference>
<dbReference type="Pfam" id="PF02675">
    <property type="entry name" value="AdoMet_dc"/>
    <property type="match status" value="1"/>
</dbReference>
<dbReference type="SUPFAM" id="SSF56276">
    <property type="entry name" value="S-adenosylmethionine decarboxylase"/>
    <property type="match status" value="1"/>
</dbReference>
<feature type="chain" id="PRO_1000013670" description="S-adenosylmethionine decarboxylase beta chain" evidence="1">
    <location>
        <begin position="1"/>
        <end position="62"/>
    </location>
</feature>
<feature type="chain" id="PRO_0000315023" description="S-adenosylmethionine decarboxylase alpha chain" evidence="1">
    <location>
        <begin position="63"/>
        <end position="124"/>
    </location>
</feature>
<feature type="active site" description="Schiff-base intermediate with substrate; via pyruvic acid" evidence="1">
    <location>
        <position position="63"/>
    </location>
</feature>
<feature type="active site" description="Proton acceptor; for processing activity" evidence="1">
    <location>
        <position position="68"/>
    </location>
</feature>
<feature type="active site" description="Proton donor; for catalytic activity" evidence="1">
    <location>
        <position position="83"/>
    </location>
</feature>
<feature type="site" description="Cleavage (non-hydrolytic); by autolysis" evidence="1">
    <location>
        <begin position="62"/>
        <end position="63"/>
    </location>
</feature>
<feature type="modified residue" description="Pyruvic acid (Ser); by autocatalysis" evidence="1">
    <location>
        <position position="63"/>
    </location>
</feature>
<proteinExistence type="inferred from homology"/>
<protein>
    <recommendedName>
        <fullName evidence="1">S-adenosylmethionine decarboxylase proenzyme</fullName>
        <shortName evidence="1">AdoMetDC</shortName>
        <shortName evidence="1">SAMDC</shortName>
        <ecNumber evidence="1">4.1.1.50</ecNumber>
    </recommendedName>
    <component>
        <recommendedName>
            <fullName evidence="1">S-adenosylmethionine decarboxylase beta chain</fullName>
        </recommendedName>
    </component>
    <component>
        <recommendedName>
            <fullName evidence="1">S-adenosylmethionine decarboxylase alpha chain</fullName>
        </recommendedName>
    </component>
</protein>
<name>SPEH_CALS8</name>
<evidence type="ECO:0000255" key="1">
    <source>
        <dbReference type="HAMAP-Rule" id="MF_00464"/>
    </source>
</evidence>
<keyword id="KW-0068">Autocatalytic cleavage</keyword>
<keyword id="KW-0210">Decarboxylase</keyword>
<keyword id="KW-0456">Lyase</keyword>
<keyword id="KW-0620">Polyamine biosynthesis</keyword>
<keyword id="KW-0670">Pyruvate</keyword>
<keyword id="KW-0949">S-adenosyl-L-methionine</keyword>
<keyword id="KW-0704">Schiff base</keyword>
<keyword id="KW-0745">Spermidine biosynthesis</keyword>
<keyword id="KW-0865">Zymogen</keyword>
<organism>
    <name type="scientific">Caldicellulosiruptor saccharolyticus (strain ATCC 43494 / DSM 8903 / Tp8T 6331)</name>
    <dbReference type="NCBI Taxonomy" id="351627"/>
    <lineage>
        <taxon>Bacteria</taxon>
        <taxon>Bacillati</taxon>
        <taxon>Bacillota</taxon>
        <taxon>Bacillota incertae sedis</taxon>
        <taxon>Caldicellulosiruptorales</taxon>
        <taxon>Caldicellulosiruptoraceae</taxon>
        <taxon>Caldicellulosiruptor</taxon>
    </lineage>
</organism>
<reference key="1">
    <citation type="submission" date="2007-04" db="EMBL/GenBank/DDBJ databases">
        <title>Genome sequence of the thermophilic hydrogen-producing bacterium Caldicellulosiruptor saccharolyticus DSM 8903.</title>
        <authorList>
            <person name="Copeland A."/>
            <person name="Lucas S."/>
            <person name="Lapidus A."/>
            <person name="Barry K."/>
            <person name="Detter J.C."/>
            <person name="Glavina del Rio T."/>
            <person name="Hammon N."/>
            <person name="Israni S."/>
            <person name="Dalin E."/>
            <person name="Tice H."/>
            <person name="Pitluck S."/>
            <person name="Kiss H."/>
            <person name="Brettin T."/>
            <person name="Bruce D."/>
            <person name="Han C."/>
            <person name="Schmutz J."/>
            <person name="Larimer F."/>
            <person name="Land M."/>
            <person name="Hauser L."/>
            <person name="Kyrpides N."/>
            <person name="Lykidis A."/>
            <person name="van de Werken H.J.G."/>
            <person name="Verhaart M.R.A."/>
            <person name="VanFossen A.L."/>
            <person name="Lewis D.L."/>
            <person name="Nichols J.D."/>
            <person name="Goorissen H.P."/>
            <person name="van Niel E.W.J."/>
            <person name="Stams F.J.M."/>
            <person name="Willquist K.U."/>
            <person name="Ward D.E."/>
            <person name="van der Oost J."/>
            <person name="Kelly R.M."/>
            <person name="Kengen S.M.W."/>
            <person name="Richardson P."/>
        </authorList>
    </citation>
    <scope>NUCLEOTIDE SEQUENCE [LARGE SCALE GENOMIC DNA]</scope>
    <source>
        <strain>ATCC 43494 / DSM 8903 / Tp8T 6331</strain>
    </source>
</reference>
<accession>A4XJ25</accession>